<accession>A8F0H9</accession>
<keyword id="KW-0963">Cytoplasm</keyword>
<keyword id="KW-0521">NADP</keyword>
<keyword id="KW-0560">Oxidoreductase</keyword>
<keyword id="KW-0671">Queuosine biosynthesis</keyword>
<organism>
    <name type="scientific">Rickettsia massiliae (strain Mtu5)</name>
    <dbReference type="NCBI Taxonomy" id="416276"/>
    <lineage>
        <taxon>Bacteria</taxon>
        <taxon>Pseudomonadati</taxon>
        <taxon>Pseudomonadota</taxon>
        <taxon>Alphaproteobacteria</taxon>
        <taxon>Rickettsiales</taxon>
        <taxon>Rickettsiaceae</taxon>
        <taxon>Rickettsieae</taxon>
        <taxon>Rickettsia</taxon>
        <taxon>spotted fever group</taxon>
    </lineage>
</organism>
<feature type="chain" id="PRO_1000062359" description="NADPH-dependent 7-cyano-7-deazaguanine reductase">
    <location>
        <begin position="1"/>
        <end position="273"/>
    </location>
</feature>
<feature type="active site" description="Thioimide intermediate" evidence="1">
    <location>
        <position position="179"/>
    </location>
</feature>
<feature type="active site" description="Proton donor" evidence="1">
    <location>
        <position position="186"/>
    </location>
</feature>
<feature type="binding site" evidence="1">
    <location>
        <begin position="81"/>
        <end position="83"/>
    </location>
    <ligand>
        <name>substrate</name>
    </ligand>
</feature>
<feature type="binding site" evidence="1">
    <location>
        <begin position="83"/>
        <end position="84"/>
    </location>
    <ligand>
        <name>NADPH</name>
        <dbReference type="ChEBI" id="CHEBI:57783"/>
    </ligand>
</feature>
<feature type="binding site" evidence="1">
    <location>
        <begin position="218"/>
        <end position="219"/>
    </location>
    <ligand>
        <name>substrate</name>
    </ligand>
</feature>
<feature type="binding site" evidence="1">
    <location>
        <begin position="247"/>
        <end position="248"/>
    </location>
    <ligand>
        <name>NADPH</name>
        <dbReference type="ChEBI" id="CHEBI:57783"/>
    </ligand>
</feature>
<name>QUEF_RICM5</name>
<proteinExistence type="inferred from homology"/>
<comment type="function">
    <text evidence="1">Catalyzes the NADPH-dependent reduction of 7-cyano-7-deazaguanine (preQ0) to 7-aminomethyl-7-deazaguanine (preQ1).</text>
</comment>
<comment type="catalytic activity">
    <reaction evidence="1">
        <text>7-aminomethyl-7-carbaguanine + 2 NADP(+) = 7-cyano-7-deazaguanine + 2 NADPH + 3 H(+)</text>
        <dbReference type="Rhea" id="RHEA:13409"/>
        <dbReference type="ChEBI" id="CHEBI:15378"/>
        <dbReference type="ChEBI" id="CHEBI:45075"/>
        <dbReference type="ChEBI" id="CHEBI:57783"/>
        <dbReference type="ChEBI" id="CHEBI:58349"/>
        <dbReference type="ChEBI" id="CHEBI:58703"/>
        <dbReference type="EC" id="1.7.1.13"/>
    </reaction>
</comment>
<comment type="pathway">
    <text evidence="1">tRNA modification; tRNA-queuosine biosynthesis.</text>
</comment>
<comment type="subunit">
    <text evidence="1">Homodimer.</text>
</comment>
<comment type="subcellular location">
    <subcellularLocation>
        <location evidence="1">Cytoplasm</location>
    </subcellularLocation>
</comment>
<comment type="similarity">
    <text evidence="1">Belongs to the GTP cyclohydrolase I family. QueF type 2 subfamily.</text>
</comment>
<sequence length="273" mass="31119">MPLSTSLLGKKSTYKDSYDVTLLFKIPRINNRNELGINSNNLPFYGVDVWNTYELSCLNKNGKPWVGVGTFYIPTDSENIVESKSFKLYLNSFNNFVVESVKELERIILQDLSNVTHAKVTGRIFPINTKVEFGVPSGKNIDDLDIVCNNYGAPDNSLIEYEDVLVEEEINSNLLKSNCLVTGQPDWGTIVIKYKGKKLKHDSFLKYLISFRNCNEFAEQCAERIFTDIKNAISPDFLSISIVYTRRGGIDICPYRSTDKSYTLPSDKRFIRQ</sequence>
<dbReference type="EC" id="1.7.1.13" evidence="1"/>
<dbReference type="EMBL" id="CP000683">
    <property type="protein sequence ID" value="ABV84415.1"/>
    <property type="molecule type" value="Genomic_DNA"/>
</dbReference>
<dbReference type="RefSeq" id="WP_012152396.1">
    <property type="nucleotide sequence ID" value="NC_009900.1"/>
</dbReference>
<dbReference type="SMR" id="A8F0H9"/>
<dbReference type="KEGG" id="rms:RMA_0110"/>
<dbReference type="HOGENOM" id="CLU_054738_0_0_5"/>
<dbReference type="UniPathway" id="UPA00392"/>
<dbReference type="Proteomes" id="UP000001311">
    <property type="component" value="Chromosome"/>
</dbReference>
<dbReference type="GO" id="GO:0005737">
    <property type="term" value="C:cytoplasm"/>
    <property type="evidence" value="ECO:0007669"/>
    <property type="project" value="UniProtKB-SubCell"/>
</dbReference>
<dbReference type="GO" id="GO:0033739">
    <property type="term" value="F:preQ1 synthase activity"/>
    <property type="evidence" value="ECO:0007669"/>
    <property type="project" value="UniProtKB-UniRule"/>
</dbReference>
<dbReference type="GO" id="GO:0008616">
    <property type="term" value="P:queuosine biosynthetic process"/>
    <property type="evidence" value="ECO:0007669"/>
    <property type="project" value="UniProtKB-UniRule"/>
</dbReference>
<dbReference type="GO" id="GO:0006400">
    <property type="term" value="P:tRNA modification"/>
    <property type="evidence" value="ECO:0007669"/>
    <property type="project" value="UniProtKB-UniRule"/>
</dbReference>
<dbReference type="Gene3D" id="3.30.1130.10">
    <property type="match status" value="2"/>
</dbReference>
<dbReference type="HAMAP" id="MF_00817">
    <property type="entry name" value="QueF_type2"/>
    <property type="match status" value="1"/>
</dbReference>
<dbReference type="InterPro" id="IPR043133">
    <property type="entry name" value="GTP-CH-I_C/QueF"/>
</dbReference>
<dbReference type="InterPro" id="IPR050084">
    <property type="entry name" value="NADPH_dep_7-cyano-7-deazaG_red"/>
</dbReference>
<dbReference type="InterPro" id="IPR029500">
    <property type="entry name" value="QueF"/>
</dbReference>
<dbReference type="InterPro" id="IPR029139">
    <property type="entry name" value="QueF_N"/>
</dbReference>
<dbReference type="InterPro" id="IPR016428">
    <property type="entry name" value="QueF_type2"/>
</dbReference>
<dbReference type="NCBIfam" id="TIGR03138">
    <property type="entry name" value="QueF"/>
    <property type="match status" value="1"/>
</dbReference>
<dbReference type="PANTHER" id="PTHR34354">
    <property type="entry name" value="NADPH-DEPENDENT 7-CYANO-7-DEAZAGUANINE REDUCTASE"/>
    <property type="match status" value="1"/>
</dbReference>
<dbReference type="PANTHER" id="PTHR34354:SF1">
    <property type="entry name" value="NADPH-DEPENDENT 7-CYANO-7-DEAZAGUANINE REDUCTASE"/>
    <property type="match status" value="1"/>
</dbReference>
<dbReference type="Pfam" id="PF14489">
    <property type="entry name" value="QueF"/>
    <property type="match status" value="1"/>
</dbReference>
<dbReference type="Pfam" id="PF14819">
    <property type="entry name" value="QueF_N"/>
    <property type="match status" value="1"/>
</dbReference>
<dbReference type="PIRSF" id="PIRSF004750">
    <property type="entry name" value="Nitrile_oxidored_YqcD_prd"/>
    <property type="match status" value="1"/>
</dbReference>
<dbReference type="SUPFAM" id="SSF55620">
    <property type="entry name" value="Tetrahydrobiopterin biosynthesis enzymes-like"/>
    <property type="match status" value="1"/>
</dbReference>
<evidence type="ECO:0000255" key="1">
    <source>
        <dbReference type="HAMAP-Rule" id="MF_00817"/>
    </source>
</evidence>
<gene>
    <name evidence="1" type="primary">queF</name>
    <name type="ordered locus">RMA_0110</name>
</gene>
<reference key="1">
    <citation type="journal article" date="2007" name="Genome Res.">
        <title>Lateral gene transfer between obligate intracellular bacteria: evidence from the Rickettsia massiliae genome.</title>
        <authorList>
            <person name="Blanc G."/>
            <person name="Ogata H."/>
            <person name="Robert C."/>
            <person name="Audic S."/>
            <person name="Claverie J.-M."/>
            <person name="Raoult D."/>
        </authorList>
    </citation>
    <scope>NUCLEOTIDE SEQUENCE [LARGE SCALE GENOMIC DNA]</scope>
    <source>
        <strain>Mtu5</strain>
    </source>
</reference>
<protein>
    <recommendedName>
        <fullName evidence="1">NADPH-dependent 7-cyano-7-deazaguanine reductase</fullName>
        <ecNumber evidence="1">1.7.1.13</ecNumber>
    </recommendedName>
    <alternativeName>
        <fullName evidence="1">7-cyano-7-carbaguanine reductase</fullName>
    </alternativeName>
    <alternativeName>
        <fullName evidence="1">NADPH-dependent nitrile oxidoreductase</fullName>
    </alternativeName>
    <alternativeName>
        <fullName evidence="1">PreQ(0) reductase</fullName>
    </alternativeName>
</protein>